<comment type="function">
    <text evidence="1">Aspartyl-tRNA synthetase with relaxed tRNA specificity since it is able to aspartylate not only its cognate tRNA(Asp) but also tRNA(Asn). Reaction proceeds in two steps: L-aspartate is first activated by ATP to form Asp-AMP and then transferred to the acceptor end of tRNA(Asp/Asn).</text>
</comment>
<comment type="catalytic activity">
    <reaction evidence="1">
        <text>tRNA(Asx) + L-aspartate + ATP = L-aspartyl-tRNA(Asx) + AMP + diphosphate</text>
        <dbReference type="Rhea" id="RHEA:18349"/>
        <dbReference type="Rhea" id="RHEA-COMP:9710"/>
        <dbReference type="Rhea" id="RHEA-COMP:9711"/>
        <dbReference type="ChEBI" id="CHEBI:29991"/>
        <dbReference type="ChEBI" id="CHEBI:30616"/>
        <dbReference type="ChEBI" id="CHEBI:33019"/>
        <dbReference type="ChEBI" id="CHEBI:78442"/>
        <dbReference type="ChEBI" id="CHEBI:78516"/>
        <dbReference type="ChEBI" id="CHEBI:456215"/>
        <dbReference type="EC" id="6.1.1.23"/>
    </reaction>
</comment>
<comment type="subunit">
    <text evidence="1">Homodimer.</text>
</comment>
<comment type="subcellular location">
    <subcellularLocation>
        <location evidence="1">Cytoplasm</location>
    </subcellularLocation>
</comment>
<comment type="similarity">
    <text evidence="1">Belongs to the class-II aminoacyl-tRNA synthetase family. Type 1 subfamily.</text>
</comment>
<gene>
    <name evidence="1" type="primary">aspS</name>
    <name type="ordered locus">Sde_0913</name>
</gene>
<sequence length="594" mass="66508">MRSVYCGVVNTSNIDQEITLCGWVDRRRDHGGVIFIDLRDREGIVQVVFDPDAADKFALADKVRPEYVLRVTGKVRARSEATVNANMATGQIEVYGTDLEILNSAETPPFQLDEHTNVGEDVRLKYRYLDLRRDAMQQRLKFRSKVTNAIRNYLDDNDFLDIETPILTRATPEGARDYLVPSRTHDGKFFALPQSPQLFKQLLMVSGFDRYYQIAKCFRDEDLRADRQPEFTQIDIETSFMDEEQIMSVTEGMISKLFRELKGVELGEFPRMPYAEAMEKYGSDKPDMRIPLEMVEIKDLMASVDFKVFSGPASDPKGRVTAMKVPGGGEIPRKKIDAYTKFVSIYGAKGLAYIKVNDKTDLEGGLQSPIVKFLPQDVLQALLDRLEVENGDLIFFGADSAKVVTEALGALRCELGKDLNLYTCEWAPLWVVDFPMFEELEDGSLTALHHPFTAPSCSPEELSANPATALSRAYDMVLNGTELGGGSIRIHDQSMQQEVFRVLGIGEEEQREKFGFLLDALKYGAPPHGGLAFGLDRLIMLMTGASSIRDVIAFPKTQSAACVMTDAPGAVDKKQLEELHIRLRPVVAQPKEQG</sequence>
<organism>
    <name type="scientific">Saccharophagus degradans (strain 2-40 / ATCC 43961 / DSM 17024)</name>
    <dbReference type="NCBI Taxonomy" id="203122"/>
    <lineage>
        <taxon>Bacteria</taxon>
        <taxon>Pseudomonadati</taxon>
        <taxon>Pseudomonadota</taxon>
        <taxon>Gammaproteobacteria</taxon>
        <taxon>Cellvibrionales</taxon>
        <taxon>Cellvibrionaceae</taxon>
        <taxon>Saccharophagus</taxon>
    </lineage>
</organism>
<keyword id="KW-0030">Aminoacyl-tRNA synthetase</keyword>
<keyword id="KW-0067">ATP-binding</keyword>
<keyword id="KW-0963">Cytoplasm</keyword>
<keyword id="KW-0436">Ligase</keyword>
<keyword id="KW-0547">Nucleotide-binding</keyword>
<keyword id="KW-0648">Protein biosynthesis</keyword>
<keyword id="KW-1185">Reference proteome</keyword>
<proteinExistence type="inferred from homology"/>
<protein>
    <recommendedName>
        <fullName evidence="1">Aspartate--tRNA(Asp/Asn) ligase</fullName>
        <ecNumber evidence="1">6.1.1.23</ecNumber>
    </recommendedName>
    <alternativeName>
        <fullName evidence="1">Aspartyl-tRNA synthetase</fullName>
        <shortName evidence="1">AspRS</shortName>
    </alternativeName>
    <alternativeName>
        <fullName evidence="1">Non-discriminating aspartyl-tRNA synthetase</fullName>
        <shortName evidence="1">ND-AspRS</shortName>
    </alternativeName>
</protein>
<dbReference type="EC" id="6.1.1.23" evidence="1"/>
<dbReference type="EMBL" id="CP000282">
    <property type="protein sequence ID" value="ABD80175.1"/>
    <property type="molecule type" value="Genomic_DNA"/>
</dbReference>
<dbReference type="RefSeq" id="WP_011467396.1">
    <property type="nucleotide sequence ID" value="NC_007912.1"/>
</dbReference>
<dbReference type="SMR" id="Q21MA4"/>
<dbReference type="STRING" id="203122.Sde_0913"/>
<dbReference type="GeneID" id="98612594"/>
<dbReference type="KEGG" id="sde:Sde_0913"/>
<dbReference type="eggNOG" id="COG0173">
    <property type="taxonomic scope" value="Bacteria"/>
</dbReference>
<dbReference type="HOGENOM" id="CLU_014330_3_2_6"/>
<dbReference type="OrthoDB" id="9802326at2"/>
<dbReference type="Proteomes" id="UP000001947">
    <property type="component" value="Chromosome"/>
</dbReference>
<dbReference type="GO" id="GO:0005737">
    <property type="term" value="C:cytoplasm"/>
    <property type="evidence" value="ECO:0007669"/>
    <property type="project" value="UniProtKB-SubCell"/>
</dbReference>
<dbReference type="GO" id="GO:0004815">
    <property type="term" value="F:aspartate-tRNA ligase activity"/>
    <property type="evidence" value="ECO:0007669"/>
    <property type="project" value="UniProtKB-UniRule"/>
</dbReference>
<dbReference type="GO" id="GO:0050560">
    <property type="term" value="F:aspartate-tRNA(Asn) ligase activity"/>
    <property type="evidence" value="ECO:0007669"/>
    <property type="project" value="UniProtKB-EC"/>
</dbReference>
<dbReference type="GO" id="GO:0005524">
    <property type="term" value="F:ATP binding"/>
    <property type="evidence" value="ECO:0007669"/>
    <property type="project" value="UniProtKB-UniRule"/>
</dbReference>
<dbReference type="GO" id="GO:0003676">
    <property type="term" value="F:nucleic acid binding"/>
    <property type="evidence" value="ECO:0007669"/>
    <property type="project" value="InterPro"/>
</dbReference>
<dbReference type="GO" id="GO:0006422">
    <property type="term" value="P:aspartyl-tRNA aminoacylation"/>
    <property type="evidence" value="ECO:0007669"/>
    <property type="project" value="UniProtKB-UniRule"/>
</dbReference>
<dbReference type="CDD" id="cd00777">
    <property type="entry name" value="AspRS_core"/>
    <property type="match status" value="1"/>
</dbReference>
<dbReference type="CDD" id="cd04317">
    <property type="entry name" value="EcAspRS_like_N"/>
    <property type="match status" value="1"/>
</dbReference>
<dbReference type="Gene3D" id="3.30.930.10">
    <property type="entry name" value="Bira Bifunctional Protein, Domain 2"/>
    <property type="match status" value="1"/>
</dbReference>
<dbReference type="Gene3D" id="3.30.1360.30">
    <property type="entry name" value="GAD-like domain"/>
    <property type="match status" value="1"/>
</dbReference>
<dbReference type="Gene3D" id="2.40.50.140">
    <property type="entry name" value="Nucleic acid-binding proteins"/>
    <property type="match status" value="1"/>
</dbReference>
<dbReference type="HAMAP" id="MF_00044">
    <property type="entry name" value="Asp_tRNA_synth_type1"/>
    <property type="match status" value="1"/>
</dbReference>
<dbReference type="InterPro" id="IPR004364">
    <property type="entry name" value="Aa-tRNA-synt_II"/>
</dbReference>
<dbReference type="InterPro" id="IPR006195">
    <property type="entry name" value="aa-tRNA-synth_II"/>
</dbReference>
<dbReference type="InterPro" id="IPR045864">
    <property type="entry name" value="aa-tRNA-synth_II/BPL/LPL"/>
</dbReference>
<dbReference type="InterPro" id="IPR004524">
    <property type="entry name" value="Asp-tRNA-ligase_1"/>
</dbReference>
<dbReference type="InterPro" id="IPR047089">
    <property type="entry name" value="Asp-tRNA-ligase_1_N"/>
</dbReference>
<dbReference type="InterPro" id="IPR002312">
    <property type="entry name" value="Asp/Asn-tRNA-synth_IIb"/>
</dbReference>
<dbReference type="InterPro" id="IPR047090">
    <property type="entry name" value="AspRS_core"/>
</dbReference>
<dbReference type="InterPro" id="IPR004115">
    <property type="entry name" value="GAD-like_sf"/>
</dbReference>
<dbReference type="InterPro" id="IPR029351">
    <property type="entry name" value="GAD_dom"/>
</dbReference>
<dbReference type="InterPro" id="IPR012340">
    <property type="entry name" value="NA-bd_OB-fold"/>
</dbReference>
<dbReference type="InterPro" id="IPR004365">
    <property type="entry name" value="NA-bd_OB_tRNA"/>
</dbReference>
<dbReference type="NCBIfam" id="TIGR00459">
    <property type="entry name" value="aspS_bact"/>
    <property type="match status" value="1"/>
</dbReference>
<dbReference type="NCBIfam" id="NF001750">
    <property type="entry name" value="PRK00476.1"/>
    <property type="match status" value="1"/>
</dbReference>
<dbReference type="PANTHER" id="PTHR22594:SF5">
    <property type="entry name" value="ASPARTATE--TRNA LIGASE, MITOCHONDRIAL"/>
    <property type="match status" value="1"/>
</dbReference>
<dbReference type="PANTHER" id="PTHR22594">
    <property type="entry name" value="ASPARTYL/LYSYL-TRNA SYNTHETASE"/>
    <property type="match status" value="1"/>
</dbReference>
<dbReference type="Pfam" id="PF02938">
    <property type="entry name" value="GAD"/>
    <property type="match status" value="1"/>
</dbReference>
<dbReference type="Pfam" id="PF00152">
    <property type="entry name" value="tRNA-synt_2"/>
    <property type="match status" value="1"/>
</dbReference>
<dbReference type="Pfam" id="PF01336">
    <property type="entry name" value="tRNA_anti-codon"/>
    <property type="match status" value="1"/>
</dbReference>
<dbReference type="PRINTS" id="PR01042">
    <property type="entry name" value="TRNASYNTHASP"/>
</dbReference>
<dbReference type="SUPFAM" id="SSF55681">
    <property type="entry name" value="Class II aaRS and biotin synthetases"/>
    <property type="match status" value="1"/>
</dbReference>
<dbReference type="SUPFAM" id="SSF55261">
    <property type="entry name" value="GAD domain-like"/>
    <property type="match status" value="1"/>
</dbReference>
<dbReference type="SUPFAM" id="SSF50249">
    <property type="entry name" value="Nucleic acid-binding proteins"/>
    <property type="match status" value="1"/>
</dbReference>
<dbReference type="PROSITE" id="PS50862">
    <property type="entry name" value="AA_TRNA_LIGASE_II"/>
    <property type="match status" value="1"/>
</dbReference>
<reference key="1">
    <citation type="journal article" date="2008" name="PLoS Genet.">
        <title>Complete genome sequence of the complex carbohydrate-degrading marine bacterium, Saccharophagus degradans strain 2-40 T.</title>
        <authorList>
            <person name="Weiner R.M."/>
            <person name="Taylor L.E. II"/>
            <person name="Henrissat B."/>
            <person name="Hauser L."/>
            <person name="Land M."/>
            <person name="Coutinho P.M."/>
            <person name="Rancurel C."/>
            <person name="Saunders E.H."/>
            <person name="Longmire A.G."/>
            <person name="Zhang H."/>
            <person name="Bayer E.A."/>
            <person name="Gilbert H.J."/>
            <person name="Larimer F."/>
            <person name="Zhulin I.B."/>
            <person name="Ekborg N.A."/>
            <person name="Lamed R."/>
            <person name="Richardson P.M."/>
            <person name="Borovok I."/>
            <person name="Hutcheson S."/>
        </authorList>
    </citation>
    <scope>NUCLEOTIDE SEQUENCE [LARGE SCALE GENOMIC DNA]</scope>
    <source>
        <strain>2-40 / ATCC 43961 / DSM 17024</strain>
    </source>
</reference>
<feature type="chain" id="PRO_1000006750" description="Aspartate--tRNA(Asp/Asn) ligase">
    <location>
        <begin position="1"/>
        <end position="594"/>
    </location>
</feature>
<feature type="region of interest" description="Aspartate" evidence="1">
    <location>
        <begin position="197"/>
        <end position="200"/>
    </location>
</feature>
<feature type="binding site" evidence="1">
    <location>
        <position position="173"/>
    </location>
    <ligand>
        <name>L-aspartate</name>
        <dbReference type="ChEBI" id="CHEBI:29991"/>
    </ligand>
</feature>
<feature type="binding site" evidence="1">
    <location>
        <begin position="219"/>
        <end position="221"/>
    </location>
    <ligand>
        <name>ATP</name>
        <dbReference type="ChEBI" id="CHEBI:30616"/>
    </ligand>
</feature>
<feature type="binding site" evidence="1">
    <location>
        <position position="219"/>
    </location>
    <ligand>
        <name>L-aspartate</name>
        <dbReference type="ChEBI" id="CHEBI:29991"/>
    </ligand>
</feature>
<feature type="binding site" evidence="1">
    <location>
        <position position="228"/>
    </location>
    <ligand>
        <name>ATP</name>
        <dbReference type="ChEBI" id="CHEBI:30616"/>
    </ligand>
</feature>
<feature type="binding site" evidence="1">
    <location>
        <position position="449"/>
    </location>
    <ligand>
        <name>L-aspartate</name>
        <dbReference type="ChEBI" id="CHEBI:29991"/>
    </ligand>
</feature>
<feature type="binding site" evidence="1">
    <location>
        <position position="482"/>
    </location>
    <ligand>
        <name>ATP</name>
        <dbReference type="ChEBI" id="CHEBI:30616"/>
    </ligand>
</feature>
<feature type="binding site" evidence="1">
    <location>
        <position position="489"/>
    </location>
    <ligand>
        <name>L-aspartate</name>
        <dbReference type="ChEBI" id="CHEBI:29991"/>
    </ligand>
</feature>
<feature type="binding site" evidence="1">
    <location>
        <begin position="534"/>
        <end position="537"/>
    </location>
    <ligand>
        <name>ATP</name>
        <dbReference type="ChEBI" id="CHEBI:30616"/>
    </ligand>
</feature>
<feature type="site" description="Important for tRNA non-discrimination" evidence="1">
    <location>
        <position position="30"/>
    </location>
</feature>
<accession>Q21MA4</accession>
<evidence type="ECO:0000255" key="1">
    <source>
        <dbReference type="HAMAP-Rule" id="MF_00044"/>
    </source>
</evidence>
<name>SYDND_SACD2</name>